<keyword id="KW-0119">Carbohydrate metabolism</keyword>
<keyword id="KW-0378">Hydrolase</keyword>
<keyword id="KW-0464">Manganese</keyword>
<evidence type="ECO:0000255" key="1">
    <source>
        <dbReference type="HAMAP-Rule" id="MF_01854"/>
    </source>
</evidence>
<accession>Q03HS1</accession>
<comment type="catalytic activity">
    <reaction evidence="1">
        <text>beta-D-fructose 1,6-bisphosphate + H2O = beta-D-fructose 6-phosphate + phosphate</text>
        <dbReference type="Rhea" id="RHEA:11064"/>
        <dbReference type="ChEBI" id="CHEBI:15377"/>
        <dbReference type="ChEBI" id="CHEBI:32966"/>
        <dbReference type="ChEBI" id="CHEBI:43474"/>
        <dbReference type="ChEBI" id="CHEBI:57634"/>
        <dbReference type="EC" id="3.1.3.11"/>
    </reaction>
</comment>
<comment type="cofactor">
    <cofactor evidence="1">
        <name>Mn(2+)</name>
        <dbReference type="ChEBI" id="CHEBI:29035"/>
    </cofactor>
</comment>
<comment type="pathway">
    <text evidence="1">Carbohydrate biosynthesis; gluconeogenesis.</text>
</comment>
<comment type="similarity">
    <text evidence="1">Belongs to the FBPase class 3 family.</text>
</comment>
<organism>
    <name type="scientific">Pediococcus pentosaceus (strain ATCC 25745 / CCUG 21536 / LMG 10740 / 183-1w)</name>
    <dbReference type="NCBI Taxonomy" id="278197"/>
    <lineage>
        <taxon>Bacteria</taxon>
        <taxon>Bacillati</taxon>
        <taxon>Bacillota</taxon>
        <taxon>Bacilli</taxon>
        <taxon>Lactobacillales</taxon>
        <taxon>Lactobacillaceae</taxon>
        <taxon>Pediococcus</taxon>
    </lineage>
</organism>
<name>F16PC_PEDPA</name>
<gene>
    <name evidence="1" type="primary">fbp</name>
    <name type="ordered locus">PEPE_0144</name>
</gene>
<dbReference type="EC" id="3.1.3.11" evidence="1"/>
<dbReference type="EMBL" id="CP000422">
    <property type="protein sequence ID" value="ABJ67251.1"/>
    <property type="molecule type" value="Genomic_DNA"/>
</dbReference>
<dbReference type="RefSeq" id="WP_002834296.1">
    <property type="nucleotide sequence ID" value="NC_008525.1"/>
</dbReference>
<dbReference type="STRING" id="278197.PEPE_0144"/>
<dbReference type="GeneID" id="33062257"/>
<dbReference type="KEGG" id="ppe:PEPE_0144"/>
<dbReference type="eggNOG" id="COG3855">
    <property type="taxonomic scope" value="Bacteria"/>
</dbReference>
<dbReference type="HOGENOM" id="CLU_028392_2_0_9"/>
<dbReference type="OrthoDB" id="9779903at2"/>
<dbReference type="UniPathway" id="UPA00138"/>
<dbReference type="Proteomes" id="UP000000773">
    <property type="component" value="Chromosome"/>
</dbReference>
<dbReference type="GO" id="GO:0042132">
    <property type="term" value="F:fructose 1,6-bisphosphate 1-phosphatase activity"/>
    <property type="evidence" value="ECO:0007669"/>
    <property type="project" value="UniProtKB-UniRule"/>
</dbReference>
<dbReference type="GO" id="GO:0006094">
    <property type="term" value="P:gluconeogenesis"/>
    <property type="evidence" value="ECO:0007669"/>
    <property type="project" value="UniProtKB-UniRule"/>
</dbReference>
<dbReference type="Gene3D" id="3.60.21.10">
    <property type="match status" value="1"/>
</dbReference>
<dbReference type="HAMAP" id="MF_01854">
    <property type="entry name" value="FBPase_class3"/>
    <property type="match status" value="1"/>
</dbReference>
<dbReference type="InterPro" id="IPR009164">
    <property type="entry name" value="FBPtase_class3"/>
</dbReference>
<dbReference type="InterPro" id="IPR029052">
    <property type="entry name" value="Metallo-depent_PP-like"/>
</dbReference>
<dbReference type="Pfam" id="PF06874">
    <property type="entry name" value="FBPase_2"/>
    <property type="match status" value="1"/>
</dbReference>
<dbReference type="PIRSF" id="PIRSF000906">
    <property type="entry name" value="FBPtase_Bacill"/>
    <property type="match status" value="1"/>
</dbReference>
<dbReference type="SUPFAM" id="SSF56300">
    <property type="entry name" value="Metallo-dependent phosphatases"/>
    <property type="match status" value="1"/>
</dbReference>
<feature type="chain" id="PRO_0000363106" description="Fructose-1,6-bisphosphatase class 3">
    <location>
        <begin position="1"/>
        <end position="638"/>
    </location>
</feature>
<proteinExistence type="inferred from homology"/>
<reference key="1">
    <citation type="journal article" date="2006" name="Proc. Natl. Acad. Sci. U.S.A.">
        <title>Comparative genomics of the lactic acid bacteria.</title>
        <authorList>
            <person name="Makarova K.S."/>
            <person name="Slesarev A."/>
            <person name="Wolf Y.I."/>
            <person name="Sorokin A."/>
            <person name="Mirkin B."/>
            <person name="Koonin E.V."/>
            <person name="Pavlov A."/>
            <person name="Pavlova N."/>
            <person name="Karamychev V."/>
            <person name="Polouchine N."/>
            <person name="Shakhova V."/>
            <person name="Grigoriev I."/>
            <person name="Lou Y."/>
            <person name="Rohksar D."/>
            <person name="Lucas S."/>
            <person name="Huang K."/>
            <person name="Goodstein D.M."/>
            <person name="Hawkins T."/>
            <person name="Plengvidhya V."/>
            <person name="Welker D."/>
            <person name="Hughes J."/>
            <person name="Goh Y."/>
            <person name="Benson A."/>
            <person name="Baldwin K."/>
            <person name="Lee J.-H."/>
            <person name="Diaz-Muniz I."/>
            <person name="Dosti B."/>
            <person name="Smeianov V."/>
            <person name="Wechter W."/>
            <person name="Barabote R."/>
            <person name="Lorca G."/>
            <person name="Altermann E."/>
            <person name="Barrangou R."/>
            <person name="Ganesan B."/>
            <person name="Xie Y."/>
            <person name="Rawsthorne H."/>
            <person name="Tamir D."/>
            <person name="Parker C."/>
            <person name="Breidt F."/>
            <person name="Broadbent J.R."/>
            <person name="Hutkins R."/>
            <person name="O'Sullivan D."/>
            <person name="Steele J."/>
            <person name="Unlu G."/>
            <person name="Saier M.H. Jr."/>
            <person name="Klaenhammer T."/>
            <person name="Richardson P."/>
            <person name="Kozyavkin S."/>
            <person name="Weimer B.C."/>
            <person name="Mills D.A."/>
        </authorList>
    </citation>
    <scope>NUCLEOTIDE SEQUENCE [LARGE SCALE GENOMIC DNA]</scope>
    <source>
        <strain>ATCC 25745 / CCUG 21536 / LMG 10740 / 183-1w</strain>
    </source>
</reference>
<sequence length="638" mass="73808">MYKEKYFEELKKEFNSEDEIVTEIVNLEAILNLPKGTEYFISDIHGEYDGLNHILKTGAGIIREKINDCFPEMNETEKNELNFTVAYPKYALEKRQLEQDAEELTQWYFGMITRMIGLTQFCASKYSRSKVRKSLPPKYAYIIEELLYVEGSPKNKQKYYEQIISKIIELDRAQDLIQSLAGTIQKMVIDHIHIVGDVFDRGRKSNQVLELLEHAHSLDFQWGNHDVLWLGGYAGSQACIATLFRIATRYGYIYDLEREYGINLRALFTFATQHYQANPAFYPKAGDFDQNNLDLLSQVHQALTIIQFKLEGQVIKRQPEFQMDDRLFLDEVQQGKIQLGDQEYPLENGCFQMVDADHPYELTKEEQEVIDSLSYSFRHSPKIKVHVNFILEKGSMYLIYNNNLLYHGCIPLTEDGDFDQFEYHGQKYAGKDLLTFFERHIRAGAAKKTSDEDDDTDLMWYCWIGKKSPLFGRTAMTTFERYFIADSATHKEGDNPYFKLRDRLSTAHYILRKFGLDERNSYIINGHTPVKVSEGESPIKGGGQIIVIDGGLSKAYQKSTGIAGYTLINNSYGFQIVTHMPFQGIDDLYESQTQSTSLKRIIDRDLPRRNIADTTIGTELKRQVDDLKYLLETDEISH</sequence>
<protein>
    <recommendedName>
        <fullName evidence="1">Fructose-1,6-bisphosphatase class 3</fullName>
        <shortName evidence="1">FBPase class 3</shortName>
        <ecNumber evidence="1">3.1.3.11</ecNumber>
    </recommendedName>
    <alternativeName>
        <fullName evidence="1">D-fructose-1,6-bisphosphate 1-phosphohydrolase class 3</fullName>
    </alternativeName>
</protein>